<name>RUVC_CAMJR</name>
<dbReference type="EC" id="3.1.21.10" evidence="1"/>
<dbReference type="EMBL" id="CP000025">
    <property type="protein sequence ID" value="AAW34497.1"/>
    <property type="molecule type" value="Genomic_DNA"/>
</dbReference>
<dbReference type="RefSeq" id="WP_011050020.1">
    <property type="nucleotide sequence ID" value="NC_003912.7"/>
</dbReference>
<dbReference type="SMR" id="Q5HS68"/>
<dbReference type="KEGG" id="cjr:CJE1897"/>
<dbReference type="HOGENOM" id="CLU_091257_3_0_7"/>
<dbReference type="GO" id="GO:0005737">
    <property type="term" value="C:cytoplasm"/>
    <property type="evidence" value="ECO:0007669"/>
    <property type="project" value="UniProtKB-SubCell"/>
</dbReference>
<dbReference type="GO" id="GO:0048476">
    <property type="term" value="C:Holliday junction resolvase complex"/>
    <property type="evidence" value="ECO:0007669"/>
    <property type="project" value="UniProtKB-UniRule"/>
</dbReference>
<dbReference type="GO" id="GO:0008821">
    <property type="term" value="F:crossover junction DNA endonuclease activity"/>
    <property type="evidence" value="ECO:0007669"/>
    <property type="project" value="UniProtKB-UniRule"/>
</dbReference>
<dbReference type="GO" id="GO:0003677">
    <property type="term" value="F:DNA binding"/>
    <property type="evidence" value="ECO:0007669"/>
    <property type="project" value="UniProtKB-KW"/>
</dbReference>
<dbReference type="GO" id="GO:0000287">
    <property type="term" value="F:magnesium ion binding"/>
    <property type="evidence" value="ECO:0007669"/>
    <property type="project" value="UniProtKB-UniRule"/>
</dbReference>
<dbReference type="GO" id="GO:0006310">
    <property type="term" value="P:DNA recombination"/>
    <property type="evidence" value="ECO:0007669"/>
    <property type="project" value="UniProtKB-UniRule"/>
</dbReference>
<dbReference type="GO" id="GO:0006281">
    <property type="term" value="P:DNA repair"/>
    <property type="evidence" value="ECO:0007669"/>
    <property type="project" value="UniProtKB-UniRule"/>
</dbReference>
<dbReference type="CDD" id="cd16962">
    <property type="entry name" value="RuvC"/>
    <property type="match status" value="1"/>
</dbReference>
<dbReference type="FunFam" id="3.30.420.10:FF:000002">
    <property type="entry name" value="Crossover junction endodeoxyribonuclease RuvC"/>
    <property type="match status" value="1"/>
</dbReference>
<dbReference type="Gene3D" id="3.30.420.10">
    <property type="entry name" value="Ribonuclease H-like superfamily/Ribonuclease H"/>
    <property type="match status" value="1"/>
</dbReference>
<dbReference type="HAMAP" id="MF_00034">
    <property type="entry name" value="RuvC"/>
    <property type="match status" value="1"/>
</dbReference>
<dbReference type="InterPro" id="IPR012337">
    <property type="entry name" value="RNaseH-like_sf"/>
</dbReference>
<dbReference type="InterPro" id="IPR036397">
    <property type="entry name" value="RNaseH_sf"/>
</dbReference>
<dbReference type="InterPro" id="IPR020563">
    <property type="entry name" value="X-over_junc_endoDNase_Mg_BS"/>
</dbReference>
<dbReference type="InterPro" id="IPR002176">
    <property type="entry name" value="X-over_junc_endoDNase_RuvC"/>
</dbReference>
<dbReference type="NCBIfam" id="TIGR00228">
    <property type="entry name" value="ruvC"/>
    <property type="match status" value="1"/>
</dbReference>
<dbReference type="PANTHER" id="PTHR30194">
    <property type="entry name" value="CROSSOVER JUNCTION ENDODEOXYRIBONUCLEASE RUVC"/>
    <property type="match status" value="1"/>
</dbReference>
<dbReference type="PANTHER" id="PTHR30194:SF3">
    <property type="entry name" value="CROSSOVER JUNCTION ENDODEOXYRIBONUCLEASE RUVC"/>
    <property type="match status" value="1"/>
</dbReference>
<dbReference type="Pfam" id="PF02075">
    <property type="entry name" value="RuvC"/>
    <property type="match status" value="1"/>
</dbReference>
<dbReference type="PRINTS" id="PR00696">
    <property type="entry name" value="RSOLVASERUVC"/>
</dbReference>
<dbReference type="SUPFAM" id="SSF53098">
    <property type="entry name" value="Ribonuclease H-like"/>
    <property type="match status" value="1"/>
</dbReference>
<dbReference type="PROSITE" id="PS01321">
    <property type="entry name" value="RUVC"/>
    <property type="match status" value="1"/>
</dbReference>
<comment type="function">
    <text evidence="1">The RuvA-RuvB-RuvC complex processes Holliday junction (HJ) DNA during genetic recombination and DNA repair. Endonuclease that resolves HJ intermediates. Cleaves cruciform DNA by making single-stranded nicks across the HJ at symmetrical positions within the homologous arms, yielding a 5'-phosphate and a 3'-hydroxyl group; requires a central core of homology in the junction. The consensus cleavage sequence is 5'-(A/T)TT(C/G)-3'. Cleavage occurs on the 3'-side of the TT dinucleotide at the point of strand exchange. HJ branch migration catalyzed by RuvA-RuvB allows RuvC to scan DNA until it finds its consensus sequence, where it cleaves and resolves the cruciform DNA.</text>
</comment>
<comment type="catalytic activity">
    <reaction evidence="1">
        <text>Endonucleolytic cleavage at a junction such as a reciprocal single-stranded crossover between two homologous DNA duplexes (Holliday junction).</text>
        <dbReference type="EC" id="3.1.21.10"/>
    </reaction>
</comment>
<comment type="cofactor">
    <cofactor evidence="1">
        <name>Mg(2+)</name>
        <dbReference type="ChEBI" id="CHEBI:18420"/>
    </cofactor>
    <text evidence="1">Binds 2 Mg(2+) ion per subunit.</text>
</comment>
<comment type="subunit">
    <text evidence="1">Homodimer which binds Holliday junction (HJ) DNA. The HJ becomes 2-fold symmetrical on binding to RuvC with unstacked arms; it has a different conformation from HJ DNA in complex with RuvA. In the full resolvosome a probable DNA-RuvA(4)-RuvB(12)-RuvC(2) complex forms which resolves the HJ.</text>
</comment>
<comment type="subcellular location">
    <subcellularLocation>
        <location evidence="1">Cytoplasm</location>
    </subcellularLocation>
</comment>
<comment type="similarity">
    <text evidence="1">Belongs to the RuvC family.</text>
</comment>
<proteinExistence type="inferred from homology"/>
<accession>Q5HS68</accession>
<keyword id="KW-0963">Cytoplasm</keyword>
<keyword id="KW-0227">DNA damage</keyword>
<keyword id="KW-0233">DNA recombination</keyword>
<keyword id="KW-0234">DNA repair</keyword>
<keyword id="KW-0238">DNA-binding</keyword>
<keyword id="KW-0255">Endonuclease</keyword>
<keyword id="KW-0378">Hydrolase</keyword>
<keyword id="KW-0460">Magnesium</keyword>
<keyword id="KW-0479">Metal-binding</keyword>
<keyword id="KW-0540">Nuclease</keyword>
<gene>
    <name evidence="1" type="primary">ruvC</name>
    <name type="ordered locus">CJE1897</name>
</gene>
<reference key="1">
    <citation type="journal article" date="2005" name="PLoS Biol.">
        <title>Major structural differences and novel potential virulence mechanisms from the genomes of multiple Campylobacter species.</title>
        <authorList>
            <person name="Fouts D.E."/>
            <person name="Mongodin E.F."/>
            <person name="Mandrell R.E."/>
            <person name="Miller W.G."/>
            <person name="Rasko D.A."/>
            <person name="Ravel J."/>
            <person name="Brinkac L.M."/>
            <person name="DeBoy R.T."/>
            <person name="Parker C.T."/>
            <person name="Daugherty S.C."/>
            <person name="Dodson R.J."/>
            <person name="Durkin A.S."/>
            <person name="Madupu R."/>
            <person name="Sullivan S.A."/>
            <person name="Shetty J.U."/>
            <person name="Ayodeji M.A."/>
            <person name="Shvartsbeyn A."/>
            <person name="Schatz M.C."/>
            <person name="Badger J.H."/>
            <person name="Fraser C.M."/>
            <person name="Nelson K.E."/>
        </authorList>
    </citation>
    <scope>NUCLEOTIDE SEQUENCE [LARGE SCALE GENOMIC DNA]</scope>
    <source>
        <strain>RM1221</strain>
    </source>
</reference>
<protein>
    <recommendedName>
        <fullName evidence="1">Crossover junction endodeoxyribonuclease RuvC</fullName>
        <ecNumber evidence="1">3.1.21.10</ecNumber>
    </recommendedName>
    <alternativeName>
        <fullName evidence="1">Holliday junction nuclease RuvC</fullName>
    </alternativeName>
    <alternativeName>
        <fullName evidence="1">Holliday junction resolvase RuvC</fullName>
    </alternativeName>
</protein>
<sequence length="160" mass="17650">MNLKILGIDPGSRNCGYAIIEANKGKNILIEAGLIKIKPSTLQYQITELCEGLDLIFKNHSFDEVAIEDIFFAYNPKTVLKLAQFRGALSLKILQIHGDFAEYTPLQVKKAVTGKAKATKEQVAFMVKRLLGLSKDIKPLDITDAIAVALTHAANLRVRV</sequence>
<evidence type="ECO:0000255" key="1">
    <source>
        <dbReference type="HAMAP-Rule" id="MF_00034"/>
    </source>
</evidence>
<organism>
    <name type="scientific">Campylobacter jejuni (strain RM1221)</name>
    <dbReference type="NCBI Taxonomy" id="195099"/>
    <lineage>
        <taxon>Bacteria</taxon>
        <taxon>Pseudomonadati</taxon>
        <taxon>Campylobacterota</taxon>
        <taxon>Epsilonproteobacteria</taxon>
        <taxon>Campylobacterales</taxon>
        <taxon>Campylobacteraceae</taxon>
        <taxon>Campylobacter</taxon>
    </lineage>
</organism>
<feature type="chain" id="PRO_0000183084" description="Crossover junction endodeoxyribonuclease RuvC">
    <location>
        <begin position="1"/>
        <end position="160"/>
    </location>
</feature>
<feature type="active site" evidence="1">
    <location>
        <position position="9"/>
    </location>
</feature>
<feature type="active site" evidence="1">
    <location>
        <position position="68"/>
    </location>
</feature>
<feature type="active site" evidence="1">
    <location>
        <position position="141"/>
    </location>
</feature>
<feature type="binding site" evidence="1">
    <location>
        <position position="9"/>
    </location>
    <ligand>
        <name>Mg(2+)</name>
        <dbReference type="ChEBI" id="CHEBI:18420"/>
        <label>1</label>
    </ligand>
</feature>
<feature type="binding site" evidence="1">
    <location>
        <position position="68"/>
    </location>
    <ligand>
        <name>Mg(2+)</name>
        <dbReference type="ChEBI" id="CHEBI:18420"/>
        <label>2</label>
    </ligand>
</feature>
<feature type="binding site" evidence="1">
    <location>
        <position position="141"/>
    </location>
    <ligand>
        <name>Mg(2+)</name>
        <dbReference type="ChEBI" id="CHEBI:18420"/>
        <label>1</label>
    </ligand>
</feature>